<keyword id="KW-0143">Chaperone</keyword>
<keyword id="KW-0574">Periplasm</keyword>
<keyword id="KW-0653">Protein transport</keyword>
<keyword id="KW-1185">Reference proteome</keyword>
<keyword id="KW-0732">Signal</keyword>
<keyword id="KW-0813">Transport</keyword>
<reference key="1">
    <citation type="journal article" date="2001" name="Proc. Natl. Acad. Sci. U.S.A.">
        <title>Complete genomic sequence of Pasteurella multocida Pm70.</title>
        <authorList>
            <person name="May B.J."/>
            <person name="Zhang Q."/>
            <person name="Li L.L."/>
            <person name="Paustian M.L."/>
            <person name="Whittam T.S."/>
            <person name="Kapur V."/>
        </authorList>
    </citation>
    <scope>NUCLEOTIDE SEQUENCE [LARGE SCALE GENOMIC DNA]</scope>
    <source>
        <strain>Pm70</strain>
    </source>
</reference>
<sequence>MNNMLLKTTALLTLFLSSAAWADAASELQQRLSKVNVLSADYAQTVSSSDGKNVQQGSGTLKIKRPNLFRMDNKTPQENQIISDGKTLWFYDPFVEQVTANWVKDAVNNTPFVLLTSDDSSHWAQYNVEQKADTFTLKPKAKQSNIKQFDIRIDSEGVLRNFSTIEKDGQTNLYILRNITNQPLADGIFKFSVPKGVELDDQRQK</sequence>
<feature type="signal peptide" evidence="2">
    <location>
        <begin position="1"/>
        <end position="22"/>
    </location>
</feature>
<feature type="chain" id="PRO_0000018267" description="Outer-membrane lipoprotein carrier protein">
    <location>
        <begin position="23"/>
        <end position="205"/>
    </location>
</feature>
<dbReference type="EMBL" id="AE004439">
    <property type="protein sequence ID" value="AAK02340.1"/>
    <property type="molecule type" value="Genomic_DNA"/>
</dbReference>
<dbReference type="RefSeq" id="WP_005728421.1">
    <property type="nucleotide sequence ID" value="NC_002663.1"/>
</dbReference>
<dbReference type="SMR" id="P57835"/>
<dbReference type="STRING" id="272843.PM0256"/>
<dbReference type="EnsemblBacteria" id="AAK02340">
    <property type="protein sequence ID" value="AAK02340"/>
    <property type="gene ID" value="PM0256"/>
</dbReference>
<dbReference type="KEGG" id="pmu:PM0256"/>
<dbReference type="PATRIC" id="fig|272843.6.peg.264"/>
<dbReference type="HOGENOM" id="CLU_087560_1_1_6"/>
<dbReference type="OrthoDB" id="9787361at2"/>
<dbReference type="Proteomes" id="UP000000809">
    <property type="component" value="Chromosome"/>
</dbReference>
<dbReference type="GO" id="GO:0030288">
    <property type="term" value="C:outer membrane-bounded periplasmic space"/>
    <property type="evidence" value="ECO:0007669"/>
    <property type="project" value="TreeGrafter"/>
</dbReference>
<dbReference type="GO" id="GO:0044874">
    <property type="term" value="P:lipoprotein localization to outer membrane"/>
    <property type="evidence" value="ECO:0007669"/>
    <property type="project" value="UniProtKB-UniRule"/>
</dbReference>
<dbReference type="GO" id="GO:0042953">
    <property type="term" value="P:lipoprotein transport"/>
    <property type="evidence" value="ECO:0007669"/>
    <property type="project" value="InterPro"/>
</dbReference>
<dbReference type="CDD" id="cd16325">
    <property type="entry name" value="LolA"/>
    <property type="match status" value="1"/>
</dbReference>
<dbReference type="Gene3D" id="2.50.20.10">
    <property type="entry name" value="Lipoprotein localisation LolA/LolB/LppX"/>
    <property type="match status" value="1"/>
</dbReference>
<dbReference type="HAMAP" id="MF_00240">
    <property type="entry name" value="LolA"/>
    <property type="match status" value="1"/>
</dbReference>
<dbReference type="InterPro" id="IPR029046">
    <property type="entry name" value="LolA/LolB/LppX"/>
</dbReference>
<dbReference type="InterPro" id="IPR004564">
    <property type="entry name" value="OM_lipoprot_carrier_LolA-like"/>
</dbReference>
<dbReference type="InterPro" id="IPR018323">
    <property type="entry name" value="OM_lipoprot_carrier_LolA_Pbac"/>
</dbReference>
<dbReference type="NCBIfam" id="TIGR00547">
    <property type="entry name" value="lolA"/>
    <property type="match status" value="1"/>
</dbReference>
<dbReference type="PANTHER" id="PTHR35869">
    <property type="entry name" value="OUTER-MEMBRANE LIPOPROTEIN CARRIER PROTEIN"/>
    <property type="match status" value="1"/>
</dbReference>
<dbReference type="PANTHER" id="PTHR35869:SF1">
    <property type="entry name" value="OUTER-MEMBRANE LIPOPROTEIN CARRIER PROTEIN"/>
    <property type="match status" value="1"/>
</dbReference>
<dbReference type="Pfam" id="PF03548">
    <property type="entry name" value="LolA"/>
    <property type="match status" value="1"/>
</dbReference>
<dbReference type="SUPFAM" id="SSF89392">
    <property type="entry name" value="Prokaryotic lipoproteins and lipoprotein localization factors"/>
    <property type="match status" value="1"/>
</dbReference>
<organism>
    <name type="scientific">Pasteurella multocida (strain Pm70)</name>
    <dbReference type="NCBI Taxonomy" id="272843"/>
    <lineage>
        <taxon>Bacteria</taxon>
        <taxon>Pseudomonadati</taxon>
        <taxon>Pseudomonadota</taxon>
        <taxon>Gammaproteobacteria</taxon>
        <taxon>Pasteurellales</taxon>
        <taxon>Pasteurellaceae</taxon>
        <taxon>Pasteurella</taxon>
    </lineage>
</organism>
<comment type="function">
    <text evidence="1">Participates in the translocation of lipoproteins from the inner membrane to the outer membrane. Only forms a complex with a lipoprotein if the residue after the N-terminal Cys is not an aspartate (The Asp acts as a targeting signal to indicate that the lipoprotein should stay in the inner membrane) (By similarity).</text>
</comment>
<comment type="subunit">
    <text evidence="1">Monomer.</text>
</comment>
<comment type="subcellular location">
    <subcellularLocation>
        <location evidence="1">Periplasm</location>
    </subcellularLocation>
</comment>
<comment type="similarity">
    <text evidence="3">Belongs to the LolA family.</text>
</comment>
<name>LOLA_PASMU</name>
<gene>
    <name type="primary">lolA</name>
    <name type="ordered locus">PM0256</name>
</gene>
<protein>
    <recommendedName>
        <fullName>Outer-membrane lipoprotein carrier protein</fullName>
    </recommendedName>
</protein>
<evidence type="ECO:0000250" key="1"/>
<evidence type="ECO:0000255" key="2"/>
<evidence type="ECO:0000305" key="3"/>
<proteinExistence type="inferred from homology"/>
<accession>P57835</accession>